<keyword id="KW-0131">Cell cycle</keyword>
<keyword id="KW-0132">Cell division</keyword>
<keyword id="KW-1185">Reference proteome</keyword>
<evidence type="ECO:0000255" key="1">
    <source>
        <dbReference type="HAMAP-Rule" id="MF_00262"/>
    </source>
</evidence>
<reference key="1">
    <citation type="journal article" date="2002" name="Proc. Natl. Acad. Sci. U.S.A.">
        <title>Complete genome sequence of Clostridium perfringens, an anaerobic flesh-eater.</title>
        <authorList>
            <person name="Shimizu T."/>
            <person name="Ohtani K."/>
            <person name="Hirakawa H."/>
            <person name="Ohshima K."/>
            <person name="Yamashita A."/>
            <person name="Shiba T."/>
            <person name="Ogasawara N."/>
            <person name="Hattori M."/>
            <person name="Kuhara S."/>
            <person name="Hayashi H."/>
        </authorList>
    </citation>
    <scope>NUCLEOTIDE SEQUENCE [LARGE SCALE GENOMIC DNA]</scope>
    <source>
        <strain>13 / Type A</strain>
    </source>
</reference>
<feature type="chain" id="PRO_0000298101" description="Cell division topological specificity factor">
    <location>
        <begin position="1"/>
        <end position="90"/>
    </location>
</feature>
<accession>Q8XII2</accession>
<comment type="function">
    <text evidence="1">Prevents the cell division inhibition by proteins MinC and MinD at internal division sites while permitting inhibition at polar sites. This ensures cell division at the proper site by restricting the formation of a division septum at the midpoint of the long axis of the cell.</text>
</comment>
<comment type="similarity">
    <text evidence="1">Belongs to the MinE family.</text>
</comment>
<organism>
    <name type="scientific">Clostridium perfringens (strain 13 / Type A)</name>
    <dbReference type="NCBI Taxonomy" id="195102"/>
    <lineage>
        <taxon>Bacteria</taxon>
        <taxon>Bacillati</taxon>
        <taxon>Bacillota</taxon>
        <taxon>Clostridia</taxon>
        <taxon>Eubacteriales</taxon>
        <taxon>Clostridiaceae</taxon>
        <taxon>Clostridium</taxon>
    </lineage>
</organism>
<protein>
    <recommendedName>
        <fullName evidence="1">Cell division topological specificity factor</fullName>
    </recommendedName>
</protein>
<gene>
    <name evidence="1" type="primary">minE</name>
    <name type="ordered locus">CPE2137</name>
</gene>
<sequence length="90" mass="10128">MSFLNVFSSRPTPKQVAKDRLKVILIHDRGELSDEVLDKIRLEILDVLSKYVEIENEDVDITVTKSNPIEGESPSLVANIPIKNIKGKAR</sequence>
<name>MINE_CLOPE</name>
<proteinExistence type="inferred from homology"/>
<dbReference type="EMBL" id="BA000016">
    <property type="protein sequence ID" value="BAB81843.1"/>
    <property type="molecule type" value="Genomic_DNA"/>
</dbReference>
<dbReference type="RefSeq" id="WP_003452508.1">
    <property type="nucleotide sequence ID" value="NC_003366.1"/>
</dbReference>
<dbReference type="STRING" id="195102.gene:10491407"/>
<dbReference type="GeneID" id="93001329"/>
<dbReference type="KEGG" id="cpe:CPE2137"/>
<dbReference type="HOGENOM" id="CLU_137929_1_0_9"/>
<dbReference type="Proteomes" id="UP000000818">
    <property type="component" value="Chromosome"/>
</dbReference>
<dbReference type="GO" id="GO:0051301">
    <property type="term" value="P:cell division"/>
    <property type="evidence" value="ECO:0007669"/>
    <property type="project" value="UniProtKB-KW"/>
</dbReference>
<dbReference type="GO" id="GO:0032955">
    <property type="term" value="P:regulation of division septum assembly"/>
    <property type="evidence" value="ECO:0007669"/>
    <property type="project" value="InterPro"/>
</dbReference>
<dbReference type="Gene3D" id="3.30.1070.10">
    <property type="entry name" value="Cell division topological specificity factor MinE"/>
    <property type="match status" value="1"/>
</dbReference>
<dbReference type="HAMAP" id="MF_00262">
    <property type="entry name" value="MinE"/>
    <property type="match status" value="1"/>
</dbReference>
<dbReference type="InterPro" id="IPR005527">
    <property type="entry name" value="MinE"/>
</dbReference>
<dbReference type="InterPro" id="IPR036707">
    <property type="entry name" value="MinE_sf"/>
</dbReference>
<dbReference type="NCBIfam" id="TIGR01215">
    <property type="entry name" value="minE"/>
    <property type="match status" value="1"/>
</dbReference>
<dbReference type="Pfam" id="PF03776">
    <property type="entry name" value="MinE"/>
    <property type="match status" value="1"/>
</dbReference>
<dbReference type="SUPFAM" id="SSF55229">
    <property type="entry name" value="Cell division protein MinE topological specificity domain"/>
    <property type="match status" value="1"/>
</dbReference>